<proteinExistence type="inferred from homology"/>
<gene>
    <name evidence="1" type="primary">atpA</name>
    <name type="ordered locus">mll4065</name>
</gene>
<name>ATPA_RHILO</name>
<protein>
    <recommendedName>
        <fullName evidence="1">ATP synthase subunit alpha</fullName>
        <ecNumber evidence="1">7.1.2.2</ecNumber>
    </recommendedName>
    <alternativeName>
        <fullName evidence="1">ATP synthase F1 sector subunit alpha</fullName>
    </alternativeName>
    <alternativeName>
        <fullName evidence="1">F-ATPase subunit alpha</fullName>
    </alternativeName>
</protein>
<organism>
    <name type="scientific">Mesorhizobium japonicum (strain LMG 29417 / CECT 9101 / MAFF 303099)</name>
    <name type="common">Mesorhizobium loti (strain MAFF 303099)</name>
    <dbReference type="NCBI Taxonomy" id="266835"/>
    <lineage>
        <taxon>Bacteria</taxon>
        <taxon>Pseudomonadati</taxon>
        <taxon>Pseudomonadota</taxon>
        <taxon>Alphaproteobacteria</taxon>
        <taxon>Hyphomicrobiales</taxon>
        <taxon>Phyllobacteriaceae</taxon>
        <taxon>Mesorhizobium</taxon>
    </lineage>
</organism>
<comment type="function">
    <text evidence="1">Produces ATP from ADP in the presence of a proton gradient across the membrane. The alpha chain is a regulatory subunit.</text>
</comment>
<comment type="catalytic activity">
    <reaction evidence="1">
        <text>ATP + H2O + 4 H(+)(in) = ADP + phosphate + 5 H(+)(out)</text>
        <dbReference type="Rhea" id="RHEA:57720"/>
        <dbReference type="ChEBI" id="CHEBI:15377"/>
        <dbReference type="ChEBI" id="CHEBI:15378"/>
        <dbReference type="ChEBI" id="CHEBI:30616"/>
        <dbReference type="ChEBI" id="CHEBI:43474"/>
        <dbReference type="ChEBI" id="CHEBI:456216"/>
        <dbReference type="EC" id="7.1.2.2"/>
    </reaction>
</comment>
<comment type="subunit">
    <text evidence="1">F-type ATPases have 2 components, CF(1) - the catalytic core - and CF(0) - the membrane proton channel. CF(1) has five subunits: alpha(3), beta(3), gamma(1), delta(1), epsilon(1). CF(0) has three main subunits: a(1), b(2) and c(9-12). The alpha and beta chains form an alternating ring which encloses part of the gamma chain. CF(1) is attached to CF(0) by a central stalk formed by the gamma and epsilon chains, while a peripheral stalk is formed by the delta and b chains.</text>
</comment>
<comment type="subcellular location">
    <subcellularLocation>
        <location evidence="1">Cell inner membrane</location>
        <topology evidence="1">Peripheral membrane protein</topology>
    </subcellularLocation>
</comment>
<comment type="similarity">
    <text evidence="1">Belongs to the ATPase alpha/beta chains family.</text>
</comment>
<dbReference type="EC" id="7.1.2.2" evidence="1"/>
<dbReference type="EMBL" id="BA000012">
    <property type="protein sequence ID" value="BAB50811.1"/>
    <property type="molecule type" value="Genomic_DNA"/>
</dbReference>
<dbReference type="RefSeq" id="WP_010912154.1">
    <property type="nucleotide sequence ID" value="NC_002678.2"/>
</dbReference>
<dbReference type="SMR" id="Q98EV6"/>
<dbReference type="KEGG" id="mlo:mll4065"/>
<dbReference type="PATRIC" id="fig|266835.9.peg.3217"/>
<dbReference type="eggNOG" id="COG0056">
    <property type="taxonomic scope" value="Bacteria"/>
</dbReference>
<dbReference type="HOGENOM" id="CLU_010091_2_1_5"/>
<dbReference type="Proteomes" id="UP000000552">
    <property type="component" value="Chromosome"/>
</dbReference>
<dbReference type="GO" id="GO:0005886">
    <property type="term" value="C:plasma membrane"/>
    <property type="evidence" value="ECO:0007669"/>
    <property type="project" value="UniProtKB-SubCell"/>
</dbReference>
<dbReference type="GO" id="GO:0045259">
    <property type="term" value="C:proton-transporting ATP synthase complex"/>
    <property type="evidence" value="ECO:0007669"/>
    <property type="project" value="UniProtKB-KW"/>
</dbReference>
<dbReference type="GO" id="GO:0043531">
    <property type="term" value="F:ADP binding"/>
    <property type="evidence" value="ECO:0007669"/>
    <property type="project" value="TreeGrafter"/>
</dbReference>
<dbReference type="GO" id="GO:0005524">
    <property type="term" value="F:ATP binding"/>
    <property type="evidence" value="ECO:0007669"/>
    <property type="project" value="UniProtKB-UniRule"/>
</dbReference>
<dbReference type="GO" id="GO:0046933">
    <property type="term" value="F:proton-transporting ATP synthase activity, rotational mechanism"/>
    <property type="evidence" value="ECO:0007669"/>
    <property type="project" value="UniProtKB-UniRule"/>
</dbReference>
<dbReference type="CDD" id="cd18113">
    <property type="entry name" value="ATP-synt_F1_alpha_C"/>
    <property type="match status" value="1"/>
</dbReference>
<dbReference type="CDD" id="cd18116">
    <property type="entry name" value="ATP-synt_F1_alpha_N"/>
    <property type="match status" value="1"/>
</dbReference>
<dbReference type="CDD" id="cd01132">
    <property type="entry name" value="F1-ATPase_alpha_CD"/>
    <property type="match status" value="1"/>
</dbReference>
<dbReference type="FunFam" id="1.20.150.20:FF:000001">
    <property type="entry name" value="ATP synthase subunit alpha"/>
    <property type="match status" value="1"/>
</dbReference>
<dbReference type="FunFam" id="2.40.30.20:FF:000001">
    <property type="entry name" value="ATP synthase subunit alpha"/>
    <property type="match status" value="1"/>
</dbReference>
<dbReference type="FunFam" id="3.40.50.300:FF:002432">
    <property type="entry name" value="ATP synthase subunit alpha, mitochondrial"/>
    <property type="match status" value="1"/>
</dbReference>
<dbReference type="Gene3D" id="2.40.30.20">
    <property type="match status" value="1"/>
</dbReference>
<dbReference type="Gene3D" id="1.20.150.20">
    <property type="entry name" value="ATP synthase alpha/beta chain, C-terminal domain"/>
    <property type="match status" value="1"/>
</dbReference>
<dbReference type="Gene3D" id="3.40.50.300">
    <property type="entry name" value="P-loop containing nucleotide triphosphate hydrolases"/>
    <property type="match status" value="1"/>
</dbReference>
<dbReference type="HAMAP" id="MF_01346">
    <property type="entry name" value="ATP_synth_alpha_bact"/>
    <property type="match status" value="1"/>
</dbReference>
<dbReference type="InterPro" id="IPR023366">
    <property type="entry name" value="ATP_synth_asu-like_sf"/>
</dbReference>
<dbReference type="InterPro" id="IPR000793">
    <property type="entry name" value="ATP_synth_asu_C"/>
</dbReference>
<dbReference type="InterPro" id="IPR038376">
    <property type="entry name" value="ATP_synth_asu_C_sf"/>
</dbReference>
<dbReference type="InterPro" id="IPR033732">
    <property type="entry name" value="ATP_synth_F1_a_nt-bd_dom"/>
</dbReference>
<dbReference type="InterPro" id="IPR005294">
    <property type="entry name" value="ATP_synth_F1_asu"/>
</dbReference>
<dbReference type="InterPro" id="IPR020003">
    <property type="entry name" value="ATPase_a/bsu_AS"/>
</dbReference>
<dbReference type="InterPro" id="IPR004100">
    <property type="entry name" value="ATPase_F1/V1/A1_a/bsu_N"/>
</dbReference>
<dbReference type="InterPro" id="IPR036121">
    <property type="entry name" value="ATPase_F1/V1/A1_a/bsu_N_sf"/>
</dbReference>
<dbReference type="InterPro" id="IPR000194">
    <property type="entry name" value="ATPase_F1/V1/A1_a/bsu_nucl-bd"/>
</dbReference>
<dbReference type="InterPro" id="IPR027417">
    <property type="entry name" value="P-loop_NTPase"/>
</dbReference>
<dbReference type="NCBIfam" id="TIGR00962">
    <property type="entry name" value="atpA"/>
    <property type="match status" value="1"/>
</dbReference>
<dbReference type="NCBIfam" id="NF009884">
    <property type="entry name" value="PRK13343.1"/>
    <property type="match status" value="1"/>
</dbReference>
<dbReference type="PANTHER" id="PTHR48082">
    <property type="entry name" value="ATP SYNTHASE SUBUNIT ALPHA, MITOCHONDRIAL"/>
    <property type="match status" value="1"/>
</dbReference>
<dbReference type="PANTHER" id="PTHR48082:SF2">
    <property type="entry name" value="ATP SYNTHASE SUBUNIT ALPHA, MITOCHONDRIAL"/>
    <property type="match status" value="1"/>
</dbReference>
<dbReference type="Pfam" id="PF00006">
    <property type="entry name" value="ATP-synt_ab"/>
    <property type="match status" value="1"/>
</dbReference>
<dbReference type="Pfam" id="PF00306">
    <property type="entry name" value="ATP-synt_ab_C"/>
    <property type="match status" value="1"/>
</dbReference>
<dbReference type="Pfam" id="PF02874">
    <property type="entry name" value="ATP-synt_ab_N"/>
    <property type="match status" value="1"/>
</dbReference>
<dbReference type="PIRSF" id="PIRSF039088">
    <property type="entry name" value="F_ATPase_subunit_alpha"/>
    <property type="match status" value="1"/>
</dbReference>
<dbReference type="SUPFAM" id="SSF47917">
    <property type="entry name" value="C-terminal domain of alpha and beta subunits of F1 ATP synthase"/>
    <property type="match status" value="1"/>
</dbReference>
<dbReference type="SUPFAM" id="SSF50615">
    <property type="entry name" value="N-terminal domain of alpha and beta subunits of F1 ATP synthase"/>
    <property type="match status" value="1"/>
</dbReference>
<dbReference type="SUPFAM" id="SSF52540">
    <property type="entry name" value="P-loop containing nucleoside triphosphate hydrolases"/>
    <property type="match status" value="1"/>
</dbReference>
<dbReference type="PROSITE" id="PS00152">
    <property type="entry name" value="ATPASE_ALPHA_BETA"/>
    <property type="match status" value="1"/>
</dbReference>
<accession>Q98EV6</accession>
<evidence type="ECO:0000255" key="1">
    <source>
        <dbReference type="HAMAP-Rule" id="MF_01346"/>
    </source>
</evidence>
<keyword id="KW-0066">ATP synthesis</keyword>
<keyword id="KW-0067">ATP-binding</keyword>
<keyword id="KW-0997">Cell inner membrane</keyword>
<keyword id="KW-1003">Cell membrane</keyword>
<keyword id="KW-0139">CF(1)</keyword>
<keyword id="KW-0375">Hydrogen ion transport</keyword>
<keyword id="KW-0406">Ion transport</keyword>
<keyword id="KW-0472">Membrane</keyword>
<keyword id="KW-0547">Nucleotide-binding</keyword>
<keyword id="KW-1278">Translocase</keyword>
<keyword id="KW-0813">Transport</keyword>
<feature type="chain" id="PRO_0000238337" description="ATP synthase subunit alpha">
    <location>
        <begin position="1"/>
        <end position="509"/>
    </location>
</feature>
<feature type="binding site" evidence="1">
    <location>
        <begin position="169"/>
        <end position="176"/>
    </location>
    <ligand>
        <name>ATP</name>
        <dbReference type="ChEBI" id="CHEBI:30616"/>
    </ligand>
</feature>
<feature type="site" description="Required for activity" evidence="1">
    <location>
        <position position="370"/>
    </location>
</feature>
<sequence>MDIRAAEISAILKDQIKNFGREAEVSEVGQVLSVGDGIARVYGLDNVQAGEMVEFPGGIRGMALNLEADNVGVVIFGADRDIKEGDTVKRTGAIVDVPVGPGLLGRVVDALGNPIDGKGPIKATERKRVDVKAPGIIPRKSVHEPMSTGLKAIDALIPVGRGQRELVIGDRQTGKTAIILDTMLNQKSVHDNGPEKEKLYCVYVAVGQKRSTVAQFVKVLEERGALEYSIIVAATASDPAPMQFLAPFAGCTMGEYFRDNGMHALISYDDLSKQAVAYRQMSLLLRRPPGREAYPGDVFYLHSRLLERAAKLNDDLGNGSLTALPVIETQANDVSAYIPTNVISITDGQIFLETNLFFQGIRPAVNVGLSVSRVGSSAQIKAMKQVAGSIKGELAQYREMAAFAQFGSDLDAATQRLLNRGSRLTELLKQPQFSPLKTEEQVAVIFAGVNGYLDKLPVNQVGKFEHGLLSHMRAAGKDVLDAIRKEKALSDDLRAKLKAEIDAFAKTFA</sequence>
<reference key="1">
    <citation type="journal article" date="2000" name="DNA Res.">
        <title>Complete genome structure of the nitrogen-fixing symbiotic bacterium Mesorhizobium loti.</title>
        <authorList>
            <person name="Kaneko T."/>
            <person name="Nakamura Y."/>
            <person name="Sato S."/>
            <person name="Asamizu E."/>
            <person name="Kato T."/>
            <person name="Sasamoto S."/>
            <person name="Watanabe A."/>
            <person name="Idesawa K."/>
            <person name="Ishikawa A."/>
            <person name="Kawashima K."/>
            <person name="Kimura T."/>
            <person name="Kishida Y."/>
            <person name="Kiyokawa C."/>
            <person name="Kohara M."/>
            <person name="Matsumoto M."/>
            <person name="Matsuno A."/>
            <person name="Mochizuki Y."/>
            <person name="Nakayama S."/>
            <person name="Nakazaki N."/>
            <person name="Shimpo S."/>
            <person name="Sugimoto M."/>
            <person name="Takeuchi C."/>
            <person name="Yamada M."/>
            <person name="Tabata S."/>
        </authorList>
    </citation>
    <scope>NUCLEOTIDE SEQUENCE [LARGE SCALE GENOMIC DNA]</scope>
    <source>
        <strain>LMG 29417 / CECT 9101 / MAFF 303099</strain>
    </source>
</reference>